<comment type="function">
    <text evidence="3 4">Plays a systemic role in water and solute homeostasis.</text>
</comment>
<comment type="subcellular location">
    <subcellularLocation>
        <location evidence="5">Secreted</location>
    </subcellularLocation>
</comment>
<comment type="tissue specificity">
    <text evidence="3">Expressed in unstressed leaves.</text>
</comment>
<comment type="sequence caution" evidence="5">
    <conflict type="erroneous initiation">
        <sequence resource="EMBL-CDS" id="AAD08935"/>
    </conflict>
</comment>
<evidence type="ECO:0000255" key="1"/>
<evidence type="ECO:0000255" key="2">
    <source>
        <dbReference type="PROSITE-ProRule" id="PRU00079"/>
    </source>
</evidence>
<evidence type="ECO:0000269" key="3">
    <source>
    </source>
</evidence>
<evidence type="ECO:0000269" key="4">
    <source>
    </source>
</evidence>
<evidence type="ECO:0000305" key="5"/>
<organism>
    <name type="scientific">Arabidopsis thaliana</name>
    <name type="common">Mouse-ear cress</name>
    <dbReference type="NCBI Taxonomy" id="3702"/>
    <lineage>
        <taxon>Eukaryota</taxon>
        <taxon>Viridiplantae</taxon>
        <taxon>Streptophyta</taxon>
        <taxon>Embryophyta</taxon>
        <taxon>Tracheophyta</taxon>
        <taxon>Spermatophyta</taxon>
        <taxon>Magnoliopsida</taxon>
        <taxon>eudicotyledons</taxon>
        <taxon>Gunneridae</taxon>
        <taxon>Pentapetalae</taxon>
        <taxon>rosids</taxon>
        <taxon>malvids</taxon>
        <taxon>Brassicales</taxon>
        <taxon>Brassicaceae</taxon>
        <taxon>Camelineae</taxon>
        <taxon>Arabidopsis</taxon>
    </lineage>
</organism>
<protein>
    <recommendedName>
        <fullName>EG45-like domain containing protein 2</fullName>
    </recommendedName>
    <alternativeName>
        <fullName>Plant natriuretic peptide A</fullName>
        <shortName>AtEXPR3</shortName>
        <shortName>AtPNP-A</shortName>
        <shortName>Ath-ExpGamma-1.2</shortName>
    </alternativeName>
</protein>
<sequence length="130" mass="14518">MIKMAVKFVVVMIVFAQILAPIAEAAQGKAVYYDPPYTRSACYGTQRETLVVGVKNNLWQNGRACGRRYRVRCIGATYNFDRACTGRTVDVKVVDFCREPCNGDLNLSRDAFRVIANTDAGNIRVVYTPI</sequence>
<gene>
    <name type="primary">EGC2</name>
    <name type="synonym">EXPR3</name>
    <name type="synonym">PNP-A</name>
    <name type="ordered locus">At2g18660</name>
    <name type="ORF">MSF3.4</name>
</gene>
<proteinExistence type="evidence at transcript level"/>
<reference key="1">
    <citation type="journal article" date="1999" name="Nature">
        <title>Sequence and analysis of chromosome 2 of the plant Arabidopsis thaliana.</title>
        <authorList>
            <person name="Lin X."/>
            <person name="Kaul S."/>
            <person name="Rounsley S.D."/>
            <person name="Shea T.P."/>
            <person name="Benito M.-I."/>
            <person name="Town C.D."/>
            <person name="Fujii C.Y."/>
            <person name="Mason T.M."/>
            <person name="Bowman C.L."/>
            <person name="Barnstead M.E."/>
            <person name="Feldblyum T.V."/>
            <person name="Buell C.R."/>
            <person name="Ketchum K.A."/>
            <person name="Lee J.J."/>
            <person name="Ronning C.M."/>
            <person name="Koo H.L."/>
            <person name="Moffat K.S."/>
            <person name="Cronin L.A."/>
            <person name="Shen M."/>
            <person name="Pai G."/>
            <person name="Van Aken S."/>
            <person name="Umayam L."/>
            <person name="Tallon L.J."/>
            <person name="Gill J.E."/>
            <person name="Adams M.D."/>
            <person name="Carrera A.J."/>
            <person name="Creasy T.H."/>
            <person name="Goodman H.M."/>
            <person name="Somerville C.R."/>
            <person name="Copenhaver G.P."/>
            <person name="Preuss D."/>
            <person name="Nierman W.C."/>
            <person name="White O."/>
            <person name="Eisen J.A."/>
            <person name="Salzberg S.L."/>
            <person name="Fraser C.M."/>
            <person name="Venter J.C."/>
        </authorList>
    </citation>
    <scope>NUCLEOTIDE SEQUENCE [LARGE SCALE GENOMIC DNA]</scope>
    <source>
        <strain>cv. Columbia</strain>
    </source>
</reference>
<reference key="2">
    <citation type="journal article" date="2017" name="Plant J.">
        <title>Araport11: a complete reannotation of the Arabidopsis thaliana reference genome.</title>
        <authorList>
            <person name="Cheng C.Y."/>
            <person name="Krishnakumar V."/>
            <person name="Chan A.P."/>
            <person name="Thibaud-Nissen F."/>
            <person name="Schobel S."/>
            <person name="Town C.D."/>
        </authorList>
    </citation>
    <scope>GENOME REANNOTATION</scope>
    <source>
        <strain>cv. Columbia</strain>
    </source>
</reference>
<reference key="3">
    <citation type="journal article" date="2003" name="Science">
        <title>Empirical analysis of transcriptional activity in the Arabidopsis genome.</title>
        <authorList>
            <person name="Yamada K."/>
            <person name="Lim J."/>
            <person name="Dale J.M."/>
            <person name="Chen H."/>
            <person name="Shinn P."/>
            <person name="Palm C.J."/>
            <person name="Southwick A.M."/>
            <person name="Wu H.C."/>
            <person name="Kim C.J."/>
            <person name="Nguyen M."/>
            <person name="Pham P.K."/>
            <person name="Cheuk R.F."/>
            <person name="Karlin-Newmann G."/>
            <person name="Liu S.X."/>
            <person name="Lam B."/>
            <person name="Sakano H."/>
            <person name="Wu T."/>
            <person name="Yu G."/>
            <person name="Miranda M."/>
            <person name="Quach H.L."/>
            <person name="Tripp M."/>
            <person name="Chang C.H."/>
            <person name="Lee J.M."/>
            <person name="Toriumi M.J."/>
            <person name="Chan M.M."/>
            <person name="Tang C.C."/>
            <person name="Onodera C.S."/>
            <person name="Deng J.M."/>
            <person name="Akiyama K."/>
            <person name="Ansari Y."/>
            <person name="Arakawa T."/>
            <person name="Banh J."/>
            <person name="Banno F."/>
            <person name="Bowser L."/>
            <person name="Brooks S.Y."/>
            <person name="Carninci P."/>
            <person name="Chao Q."/>
            <person name="Choy N."/>
            <person name="Enju A."/>
            <person name="Goldsmith A.D."/>
            <person name="Gurjal M."/>
            <person name="Hansen N.F."/>
            <person name="Hayashizaki Y."/>
            <person name="Johnson-Hopson C."/>
            <person name="Hsuan V.W."/>
            <person name="Iida K."/>
            <person name="Karnes M."/>
            <person name="Khan S."/>
            <person name="Koesema E."/>
            <person name="Ishida J."/>
            <person name="Jiang P.X."/>
            <person name="Jones T."/>
            <person name="Kawai J."/>
            <person name="Kamiya A."/>
            <person name="Meyers C."/>
            <person name="Nakajima M."/>
            <person name="Narusaka M."/>
            <person name="Seki M."/>
            <person name="Sakurai T."/>
            <person name="Satou M."/>
            <person name="Tamse R."/>
            <person name="Vaysberg M."/>
            <person name="Wallender E.K."/>
            <person name="Wong C."/>
            <person name="Yamamura Y."/>
            <person name="Yuan S."/>
            <person name="Shinozaki K."/>
            <person name="Davis R.W."/>
            <person name="Theologis A."/>
            <person name="Ecker J.R."/>
        </authorList>
    </citation>
    <scope>NUCLEOTIDE SEQUENCE [LARGE SCALE MRNA]</scope>
    <source>
        <strain>cv. Columbia</strain>
    </source>
</reference>
<reference key="4">
    <citation type="journal article" date="2002" name="J. Mol. Evol.">
        <title>Expansin-like molecules: novel functions derived from common domains.</title>
        <authorList>
            <person name="Ludidi N.N."/>
            <person name="Heazlewood J.L."/>
            <person name="Seoighe C."/>
            <person name="Irving H.R."/>
            <person name="Gehring C.A."/>
        </authorList>
    </citation>
    <scope>NUCLEOTIDE SEQUENCE [MRNA]</scope>
    <scope>TISSUE SPECIFICITY</scope>
    <scope>FUNCTION</scope>
    <source>
        <strain>cv. Landsberg erecta</strain>
    </source>
</reference>
<reference key="5">
    <citation type="journal article" date="2004" name="FEBS Lett.">
        <title>AtPNP-A is a systemically mobile natriuretic peptide immunoanalogue with a role in Arabidopsis thaliana cell volume regulation.</title>
        <authorList>
            <person name="Morse M."/>
            <person name="Pironcheva G."/>
            <person name="Gehring C."/>
        </authorList>
    </citation>
    <scope>FUNCTION</scope>
</reference>
<feature type="signal peptide" evidence="1">
    <location>
        <begin position="1"/>
        <end position="25"/>
    </location>
</feature>
<feature type="chain" id="PRO_0000008717" description="EG45-like domain containing protein 2">
    <location>
        <begin position="26"/>
        <end position="130"/>
    </location>
</feature>
<feature type="domain" description="Expansin-like EG45" evidence="2">
    <location>
        <begin position="28"/>
        <end position="130"/>
    </location>
</feature>
<feature type="glycosylation site" description="N-linked (GlcNAc...) asparagine" evidence="1">
    <location>
        <position position="106"/>
    </location>
</feature>
<feature type="sequence conflict" description="In Ref. 1; AAD08935." evidence="5" ref="1">
    <location>
        <position position="130"/>
    </location>
</feature>
<accession>Q9ZV52</accession>
<name>EGC2_ARATH</name>
<dbReference type="EMBL" id="AC005724">
    <property type="protein sequence ID" value="AAD08935.1"/>
    <property type="status" value="ALT_INIT"/>
    <property type="molecule type" value="Genomic_DNA"/>
</dbReference>
<dbReference type="EMBL" id="CP002685">
    <property type="protein sequence ID" value="AEC06790.1"/>
    <property type="molecule type" value="Genomic_DNA"/>
</dbReference>
<dbReference type="EMBL" id="AY065269">
    <property type="protein sequence ID" value="AAL38745.1"/>
    <property type="molecule type" value="mRNA"/>
</dbReference>
<dbReference type="EMBL" id="AY142603">
    <property type="protein sequence ID" value="AAN13172.1"/>
    <property type="molecule type" value="mRNA"/>
</dbReference>
<dbReference type="PIR" id="A84567">
    <property type="entry name" value="A84567"/>
</dbReference>
<dbReference type="RefSeq" id="NP_849979.1">
    <property type="nucleotide sequence ID" value="NM_179648.2"/>
</dbReference>
<dbReference type="SMR" id="Q9ZV52"/>
<dbReference type="STRING" id="3702.Q9ZV52"/>
<dbReference type="GlyCosmos" id="Q9ZV52">
    <property type="glycosylation" value="1 site, No reported glycans"/>
</dbReference>
<dbReference type="GlyGen" id="Q9ZV52">
    <property type="glycosylation" value="1 site"/>
</dbReference>
<dbReference type="SwissPalm" id="Q9ZV52"/>
<dbReference type="PaxDb" id="3702-AT2G18660.1"/>
<dbReference type="ProteomicsDB" id="221924"/>
<dbReference type="EnsemblPlants" id="AT2G18660.1">
    <property type="protein sequence ID" value="AT2G18660.1"/>
    <property type="gene ID" value="AT2G18660"/>
</dbReference>
<dbReference type="GeneID" id="816381"/>
<dbReference type="Gramene" id="AT2G18660.1">
    <property type="protein sequence ID" value="AT2G18660.1"/>
    <property type="gene ID" value="AT2G18660"/>
</dbReference>
<dbReference type="KEGG" id="ath:AT2G18660"/>
<dbReference type="Araport" id="AT2G18660"/>
<dbReference type="TAIR" id="AT2G18660">
    <property type="gene designation" value="PNP-A"/>
</dbReference>
<dbReference type="eggNOG" id="ENOG502S1DA">
    <property type="taxonomic scope" value="Eukaryota"/>
</dbReference>
<dbReference type="HOGENOM" id="CLU_112218_2_1_1"/>
<dbReference type="InParanoid" id="Q9ZV52"/>
<dbReference type="OMA" id="PYTRSAC"/>
<dbReference type="PhylomeDB" id="Q9ZV52"/>
<dbReference type="PRO" id="PR:Q9ZV52"/>
<dbReference type="Proteomes" id="UP000006548">
    <property type="component" value="Chromosome 2"/>
</dbReference>
<dbReference type="ExpressionAtlas" id="Q9ZV52">
    <property type="expression patterns" value="baseline and differential"/>
</dbReference>
<dbReference type="GO" id="GO:0048046">
    <property type="term" value="C:apoplast"/>
    <property type="evidence" value="ECO:0000314"/>
    <property type="project" value="TAIR"/>
</dbReference>
<dbReference type="GO" id="GO:0051428">
    <property type="term" value="F:peptide hormone receptor binding"/>
    <property type="evidence" value="ECO:0000353"/>
    <property type="project" value="TAIR"/>
</dbReference>
<dbReference type="GO" id="GO:0010230">
    <property type="term" value="P:alternative respiration"/>
    <property type="evidence" value="ECO:0000314"/>
    <property type="project" value="TAIR"/>
</dbReference>
<dbReference type="GO" id="GO:0009627">
    <property type="term" value="P:systemic acquired resistance"/>
    <property type="evidence" value="ECO:0000270"/>
    <property type="project" value="TAIR"/>
</dbReference>
<dbReference type="CDD" id="cd22269">
    <property type="entry name" value="DPBB_EG45-like"/>
    <property type="match status" value="1"/>
</dbReference>
<dbReference type="FunFam" id="2.40.40.10:FF:000010">
    <property type="match status" value="1"/>
</dbReference>
<dbReference type="Gene3D" id="2.40.40.10">
    <property type="entry name" value="RlpA-like domain"/>
    <property type="match status" value="1"/>
</dbReference>
<dbReference type="InterPro" id="IPR044206">
    <property type="entry name" value="EGC1/2"/>
</dbReference>
<dbReference type="InterPro" id="IPR007112">
    <property type="entry name" value="Expansin/allergen_DPBB_dom"/>
</dbReference>
<dbReference type="InterPro" id="IPR009009">
    <property type="entry name" value="RlpA-like_DPBB"/>
</dbReference>
<dbReference type="InterPro" id="IPR036908">
    <property type="entry name" value="RlpA-like_sf"/>
</dbReference>
<dbReference type="PANTHER" id="PTHR47295">
    <property type="entry name" value="EG45-LIKE DOMAIN CONTAINING PROTEIN 1-RELATED"/>
    <property type="match status" value="1"/>
</dbReference>
<dbReference type="PANTHER" id="PTHR47295:SF5">
    <property type="entry name" value="EG45-LIKE DOMAIN CONTAINING PROTEIN 2"/>
    <property type="match status" value="1"/>
</dbReference>
<dbReference type="Pfam" id="PF03330">
    <property type="entry name" value="DPBB_1"/>
    <property type="match status" value="1"/>
</dbReference>
<dbReference type="SUPFAM" id="SSF50685">
    <property type="entry name" value="Barwin-like endoglucanases"/>
    <property type="match status" value="1"/>
</dbReference>
<dbReference type="PROSITE" id="PS50842">
    <property type="entry name" value="EXPANSIN_EG45"/>
    <property type="match status" value="1"/>
</dbReference>
<keyword id="KW-0325">Glycoprotein</keyword>
<keyword id="KW-1185">Reference proteome</keyword>
<keyword id="KW-0964">Secreted</keyword>
<keyword id="KW-0732">Signal</keyword>